<accession>A4T2J3</accession>
<feature type="chain" id="PRO_1000081897" description="Large ribosomal subunit protein bL27">
    <location>
        <begin position="1"/>
        <end position="88"/>
    </location>
</feature>
<feature type="region of interest" description="Disordered" evidence="2">
    <location>
        <begin position="1"/>
        <end position="22"/>
    </location>
</feature>
<feature type="compositionally biased region" description="Polar residues" evidence="2">
    <location>
        <begin position="7"/>
        <end position="19"/>
    </location>
</feature>
<dbReference type="EMBL" id="CP000656">
    <property type="protein sequence ID" value="ABP45113.1"/>
    <property type="molecule type" value="Genomic_DNA"/>
</dbReference>
<dbReference type="SMR" id="A4T2J3"/>
<dbReference type="STRING" id="350054.Mflv_2636"/>
<dbReference type="KEGG" id="mgi:Mflv_2636"/>
<dbReference type="eggNOG" id="COG0211">
    <property type="taxonomic scope" value="Bacteria"/>
</dbReference>
<dbReference type="HOGENOM" id="CLU_095424_4_0_11"/>
<dbReference type="OrthoDB" id="9803474at2"/>
<dbReference type="GO" id="GO:0022625">
    <property type="term" value="C:cytosolic large ribosomal subunit"/>
    <property type="evidence" value="ECO:0007669"/>
    <property type="project" value="TreeGrafter"/>
</dbReference>
<dbReference type="GO" id="GO:0003735">
    <property type="term" value="F:structural constituent of ribosome"/>
    <property type="evidence" value="ECO:0007669"/>
    <property type="project" value="InterPro"/>
</dbReference>
<dbReference type="GO" id="GO:0006412">
    <property type="term" value="P:translation"/>
    <property type="evidence" value="ECO:0007669"/>
    <property type="project" value="UniProtKB-UniRule"/>
</dbReference>
<dbReference type="FunFam" id="2.40.50.100:FF:000020">
    <property type="entry name" value="50S ribosomal protein L27"/>
    <property type="match status" value="1"/>
</dbReference>
<dbReference type="Gene3D" id="2.40.50.100">
    <property type="match status" value="1"/>
</dbReference>
<dbReference type="HAMAP" id="MF_00539">
    <property type="entry name" value="Ribosomal_bL27"/>
    <property type="match status" value="1"/>
</dbReference>
<dbReference type="InterPro" id="IPR001684">
    <property type="entry name" value="Ribosomal_bL27"/>
</dbReference>
<dbReference type="InterPro" id="IPR018261">
    <property type="entry name" value="Ribosomal_bL27_CS"/>
</dbReference>
<dbReference type="NCBIfam" id="TIGR00062">
    <property type="entry name" value="L27"/>
    <property type="match status" value="1"/>
</dbReference>
<dbReference type="PANTHER" id="PTHR15893:SF0">
    <property type="entry name" value="LARGE RIBOSOMAL SUBUNIT PROTEIN BL27M"/>
    <property type="match status" value="1"/>
</dbReference>
<dbReference type="PANTHER" id="PTHR15893">
    <property type="entry name" value="RIBOSOMAL PROTEIN L27"/>
    <property type="match status" value="1"/>
</dbReference>
<dbReference type="Pfam" id="PF01016">
    <property type="entry name" value="Ribosomal_L27"/>
    <property type="match status" value="1"/>
</dbReference>
<dbReference type="PRINTS" id="PR00063">
    <property type="entry name" value="RIBOSOMALL27"/>
</dbReference>
<dbReference type="SUPFAM" id="SSF110324">
    <property type="entry name" value="Ribosomal L27 protein-like"/>
    <property type="match status" value="1"/>
</dbReference>
<dbReference type="PROSITE" id="PS00831">
    <property type="entry name" value="RIBOSOMAL_L27"/>
    <property type="match status" value="1"/>
</dbReference>
<organism>
    <name type="scientific">Mycolicibacterium gilvum (strain PYR-GCK)</name>
    <name type="common">Mycobacterium gilvum (strain PYR-GCK)</name>
    <dbReference type="NCBI Taxonomy" id="350054"/>
    <lineage>
        <taxon>Bacteria</taxon>
        <taxon>Bacillati</taxon>
        <taxon>Actinomycetota</taxon>
        <taxon>Actinomycetes</taxon>
        <taxon>Mycobacteriales</taxon>
        <taxon>Mycobacteriaceae</taxon>
        <taxon>Mycolicibacterium</taxon>
    </lineage>
</organism>
<name>RL27_MYCGI</name>
<reference key="1">
    <citation type="submission" date="2007-04" db="EMBL/GenBank/DDBJ databases">
        <title>Complete sequence of chromosome of Mycobacterium gilvum PYR-GCK.</title>
        <authorList>
            <consortium name="US DOE Joint Genome Institute"/>
            <person name="Copeland A."/>
            <person name="Lucas S."/>
            <person name="Lapidus A."/>
            <person name="Barry K."/>
            <person name="Detter J.C."/>
            <person name="Glavina del Rio T."/>
            <person name="Hammon N."/>
            <person name="Israni S."/>
            <person name="Dalin E."/>
            <person name="Tice H."/>
            <person name="Pitluck S."/>
            <person name="Chain P."/>
            <person name="Malfatti S."/>
            <person name="Shin M."/>
            <person name="Vergez L."/>
            <person name="Schmutz J."/>
            <person name="Larimer F."/>
            <person name="Land M."/>
            <person name="Hauser L."/>
            <person name="Kyrpides N."/>
            <person name="Mikhailova N."/>
            <person name="Miller C."/>
            <person name="Richardson P."/>
        </authorList>
    </citation>
    <scope>NUCLEOTIDE SEQUENCE [LARGE SCALE GENOMIC DNA]</scope>
    <source>
        <strain>PYR-GCK</strain>
    </source>
</reference>
<comment type="similarity">
    <text evidence="1">Belongs to the bacterial ribosomal protein bL27 family.</text>
</comment>
<evidence type="ECO:0000255" key="1">
    <source>
        <dbReference type="HAMAP-Rule" id="MF_00539"/>
    </source>
</evidence>
<evidence type="ECO:0000256" key="2">
    <source>
        <dbReference type="SAM" id="MobiDB-lite"/>
    </source>
</evidence>
<evidence type="ECO:0000305" key="3"/>
<gene>
    <name evidence="1" type="primary">rpmA</name>
    <name type="ordered locus">Mflv_2636</name>
</gene>
<protein>
    <recommendedName>
        <fullName evidence="1">Large ribosomal subunit protein bL27</fullName>
    </recommendedName>
    <alternativeName>
        <fullName evidence="3">50S ribosomal protein L27</fullName>
    </alternativeName>
</protein>
<sequence>MAHKKGASSSRNGRDSNAQRLGVKRFGGQVVKAGEILVRQRGTHFHPGVNVGRGGDDTLFATAPGAVEFGTKRGRKYVNIVRTVRSEA</sequence>
<keyword id="KW-0687">Ribonucleoprotein</keyword>
<keyword id="KW-0689">Ribosomal protein</keyword>
<proteinExistence type="inferred from homology"/>